<comment type="function">
    <text evidence="1">Nucleotidase that shows phosphatase activity on nucleoside 5'-monophosphates.</text>
</comment>
<comment type="catalytic activity">
    <reaction evidence="1">
        <text>a ribonucleoside 5'-phosphate + H2O = a ribonucleoside + phosphate</text>
        <dbReference type="Rhea" id="RHEA:12484"/>
        <dbReference type="ChEBI" id="CHEBI:15377"/>
        <dbReference type="ChEBI" id="CHEBI:18254"/>
        <dbReference type="ChEBI" id="CHEBI:43474"/>
        <dbReference type="ChEBI" id="CHEBI:58043"/>
        <dbReference type="EC" id="3.1.3.5"/>
    </reaction>
</comment>
<comment type="cofactor">
    <cofactor evidence="1">
        <name>a divalent metal cation</name>
        <dbReference type="ChEBI" id="CHEBI:60240"/>
    </cofactor>
    <text evidence="1">Binds 1 divalent metal cation per subunit.</text>
</comment>
<comment type="subcellular location">
    <subcellularLocation>
        <location evidence="1">Cytoplasm</location>
    </subcellularLocation>
</comment>
<comment type="similarity">
    <text evidence="1">Belongs to the SurE nucleotidase family.</text>
</comment>
<keyword id="KW-0963">Cytoplasm</keyword>
<keyword id="KW-0378">Hydrolase</keyword>
<keyword id="KW-0479">Metal-binding</keyword>
<keyword id="KW-0547">Nucleotide-binding</keyword>
<organism>
    <name type="scientific">Actinobacillus pleuropneumoniae serotype 3 (strain JL03)</name>
    <dbReference type="NCBI Taxonomy" id="434271"/>
    <lineage>
        <taxon>Bacteria</taxon>
        <taxon>Pseudomonadati</taxon>
        <taxon>Pseudomonadota</taxon>
        <taxon>Gammaproteobacteria</taxon>
        <taxon>Pasteurellales</taxon>
        <taxon>Pasteurellaceae</taxon>
        <taxon>Actinobacillus</taxon>
    </lineage>
</organism>
<evidence type="ECO:0000255" key="1">
    <source>
        <dbReference type="HAMAP-Rule" id="MF_00060"/>
    </source>
</evidence>
<name>SURE_ACTPJ</name>
<reference key="1">
    <citation type="journal article" date="2008" name="PLoS ONE">
        <title>Genome biology of Actinobacillus pleuropneumoniae JL03, an isolate of serotype 3 prevalent in China.</title>
        <authorList>
            <person name="Xu Z."/>
            <person name="Zhou Y."/>
            <person name="Li L."/>
            <person name="Zhou R."/>
            <person name="Xiao S."/>
            <person name="Wan Y."/>
            <person name="Zhang S."/>
            <person name="Wang K."/>
            <person name="Li W."/>
            <person name="Li L."/>
            <person name="Jin H."/>
            <person name="Kang M."/>
            <person name="Dalai B."/>
            <person name="Li T."/>
            <person name="Liu L."/>
            <person name="Cheng Y."/>
            <person name="Zhang L."/>
            <person name="Xu T."/>
            <person name="Zheng H."/>
            <person name="Pu S."/>
            <person name="Wang B."/>
            <person name="Gu W."/>
            <person name="Zhang X.L."/>
            <person name="Zhu G.-F."/>
            <person name="Wang S."/>
            <person name="Zhao G.-P."/>
            <person name="Chen H."/>
        </authorList>
    </citation>
    <scope>NUCLEOTIDE SEQUENCE [LARGE SCALE GENOMIC DNA]</scope>
    <source>
        <strain>JL03</strain>
    </source>
</reference>
<proteinExistence type="inferred from homology"/>
<accession>B0BTK8</accession>
<feature type="chain" id="PRO_1000091983" description="5'-nucleotidase SurE">
    <location>
        <begin position="1"/>
        <end position="254"/>
    </location>
</feature>
<feature type="binding site" evidence="1">
    <location>
        <position position="8"/>
    </location>
    <ligand>
        <name>a divalent metal cation</name>
        <dbReference type="ChEBI" id="CHEBI:60240"/>
    </ligand>
</feature>
<feature type="binding site" evidence="1">
    <location>
        <position position="9"/>
    </location>
    <ligand>
        <name>a divalent metal cation</name>
        <dbReference type="ChEBI" id="CHEBI:60240"/>
    </ligand>
</feature>
<feature type="binding site" evidence="1">
    <location>
        <position position="40"/>
    </location>
    <ligand>
        <name>a divalent metal cation</name>
        <dbReference type="ChEBI" id="CHEBI:60240"/>
    </ligand>
</feature>
<feature type="binding site" evidence="1">
    <location>
        <position position="93"/>
    </location>
    <ligand>
        <name>a divalent metal cation</name>
        <dbReference type="ChEBI" id="CHEBI:60240"/>
    </ligand>
</feature>
<sequence length="254" mass="27424">MNILISNDDGYHAQGIQTLAETLRDAGHSVTVIAPDRNRSAASSCLTLMEPIRVHQLDEFNYAVIAGTPADCVHLALNGFFEQSFDLVISGINHGANLGDDVVYSGTVAAALEGRHLPYPSLAISLVGRKSEGHLFGNNHFDTAAKVVLDLLPKVQKGIVPARQILNINVPDLPYEQVKGVMITRLGHRSPAAEIVKREDPRGATIYWLGANGVPVDASEGTDFYALAHNYVSVTPIQADMTAHYSIQALKDTF</sequence>
<gene>
    <name evidence="1" type="primary">surE</name>
    <name type="ordered locus">APJL_1974</name>
</gene>
<protein>
    <recommendedName>
        <fullName evidence="1">5'-nucleotidase SurE</fullName>
        <ecNumber evidence="1">3.1.3.5</ecNumber>
    </recommendedName>
    <alternativeName>
        <fullName evidence="1">Nucleoside 5'-monophosphate phosphohydrolase</fullName>
    </alternativeName>
</protein>
<dbReference type="EC" id="3.1.3.5" evidence="1"/>
<dbReference type="EMBL" id="CP000687">
    <property type="protein sequence ID" value="ABY70522.1"/>
    <property type="molecule type" value="Genomic_DNA"/>
</dbReference>
<dbReference type="RefSeq" id="WP_005599676.1">
    <property type="nucleotide sequence ID" value="NC_010278.1"/>
</dbReference>
<dbReference type="SMR" id="B0BTK8"/>
<dbReference type="GeneID" id="48600232"/>
<dbReference type="KEGG" id="apj:APJL_1974"/>
<dbReference type="HOGENOM" id="CLU_045192_1_2_6"/>
<dbReference type="Proteomes" id="UP000008547">
    <property type="component" value="Chromosome"/>
</dbReference>
<dbReference type="GO" id="GO:0005737">
    <property type="term" value="C:cytoplasm"/>
    <property type="evidence" value="ECO:0007669"/>
    <property type="project" value="UniProtKB-SubCell"/>
</dbReference>
<dbReference type="GO" id="GO:0008254">
    <property type="term" value="F:3'-nucleotidase activity"/>
    <property type="evidence" value="ECO:0007669"/>
    <property type="project" value="TreeGrafter"/>
</dbReference>
<dbReference type="GO" id="GO:0008253">
    <property type="term" value="F:5'-nucleotidase activity"/>
    <property type="evidence" value="ECO:0007669"/>
    <property type="project" value="UniProtKB-UniRule"/>
</dbReference>
<dbReference type="GO" id="GO:0004309">
    <property type="term" value="F:exopolyphosphatase activity"/>
    <property type="evidence" value="ECO:0007669"/>
    <property type="project" value="TreeGrafter"/>
</dbReference>
<dbReference type="GO" id="GO:0046872">
    <property type="term" value="F:metal ion binding"/>
    <property type="evidence" value="ECO:0007669"/>
    <property type="project" value="UniProtKB-UniRule"/>
</dbReference>
<dbReference type="GO" id="GO:0000166">
    <property type="term" value="F:nucleotide binding"/>
    <property type="evidence" value="ECO:0007669"/>
    <property type="project" value="UniProtKB-KW"/>
</dbReference>
<dbReference type="FunFam" id="3.40.1210.10:FF:000001">
    <property type="entry name" value="5'/3'-nucleotidase SurE"/>
    <property type="match status" value="1"/>
</dbReference>
<dbReference type="Gene3D" id="3.40.1210.10">
    <property type="entry name" value="Survival protein SurE-like phosphatase/nucleotidase"/>
    <property type="match status" value="1"/>
</dbReference>
<dbReference type="HAMAP" id="MF_00060">
    <property type="entry name" value="SurE"/>
    <property type="match status" value="1"/>
</dbReference>
<dbReference type="InterPro" id="IPR030048">
    <property type="entry name" value="SurE"/>
</dbReference>
<dbReference type="InterPro" id="IPR002828">
    <property type="entry name" value="SurE-like_Pase/nucleotidase"/>
</dbReference>
<dbReference type="InterPro" id="IPR036523">
    <property type="entry name" value="SurE-like_sf"/>
</dbReference>
<dbReference type="NCBIfam" id="NF001489">
    <property type="entry name" value="PRK00346.1-3"/>
    <property type="match status" value="1"/>
</dbReference>
<dbReference type="NCBIfam" id="NF001490">
    <property type="entry name" value="PRK00346.1-4"/>
    <property type="match status" value="1"/>
</dbReference>
<dbReference type="NCBIfam" id="TIGR00087">
    <property type="entry name" value="surE"/>
    <property type="match status" value="1"/>
</dbReference>
<dbReference type="PANTHER" id="PTHR30457">
    <property type="entry name" value="5'-NUCLEOTIDASE SURE"/>
    <property type="match status" value="1"/>
</dbReference>
<dbReference type="PANTHER" id="PTHR30457:SF12">
    <property type="entry name" value="5'_3'-NUCLEOTIDASE SURE"/>
    <property type="match status" value="1"/>
</dbReference>
<dbReference type="Pfam" id="PF01975">
    <property type="entry name" value="SurE"/>
    <property type="match status" value="1"/>
</dbReference>
<dbReference type="SUPFAM" id="SSF64167">
    <property type="entry name" value="SurE-like"/>
    <property type="match status" value="1"/>
</dbReference>